<evidence type="ECO:0000255" key="1">
    <source>
        <dbReference type="HAMAP-Rule" id="MF_01006"/>
    </source>
</evidence>
<dbReference type="EC" id="3.6.1.27" evidence="1"/>
<dbReference type="EMBL" id="CP000390">
    <property type="protein sequence ID" value="ABG64969.1"/>
    <property type="molecule type" value="Genomic_DNA"/>
</dbReference>
<dbReference type="SMR" id="Q11CA6"/>
<dbReference type="STRING" id="266779.Meso_3600"/>
<dbReference type="KEGG" id="mes:Meso_3600"/>
<dbReference type="eggNOG" id="COG1968">
    <property type="taxonomic scope" value="Bacteria"/>
</dbReference>
<dbReference type="HOGENOM" id="CLU_060296_2_0_5"/>
<dbReference type="OrthoDB" id="9808289at2"/>
<dbReference type="GO" id="GO:0005886">
    <property type="term" value="C:plasma membrane"/>
    <property type="evidence" value="ECO:0007669"/>
    <property type="project" value="UniProtKB-SubCell"/>
</dbReference>
<dbReference type="GO" id="GO:0050380">
    <property type="term" value="F:undecaprenyl-diphosphatase activity"/>
    <property type="evidence" value="ECO:0007669"/>
    <property type="project" value="UniProtKB-UniRule"/>
</dbReference>
<dbReference type="GO" id="GO:0071555">
    <property type="term" value="P:cell wall organization"/>
    <property type="evidence" value="ECO:0007669"/>
    <property type="project" value="UniProtKB-KW"/>
</dbReference>
<dbReference type="GO" id="GO:0009252">
    <property type="term" value="P:peptidoglycan biosynthetic process"/>
    <property type="evidence" value="ECO:0007669"/>
    <property type="project" value="UniProtKB-KW"/>
</dbReference>
<dbReference type="GO" id="GO:0008360">
    <property type="term" value="P:regulation of cell shape"/>
    <property type="evidence" value="ECO:0007669"/>
    <property type="project" value="UniProtKB-KW"/>
</dbReference>
<dbReference type="GO" id="GO:0046677">
    <property type="term" value="P:response to antibiotic"/>
    <property type="evidence" value="ECO:0007669"/>
    <property type="project" value="UniProtKB-UniRule"/>
</dbReference>
<dbReference type="HAMAP" id="MF_01006">
    <property type="entry name" value="Undec_diphosphatase"/>
    <property type="match status" value="1"/>
</dbReference>
<dbReference type="InterPro" id="IPR003824">
    <property type="entry name" value="UppP"/>
</dbReference>
<dbReference type="NCBIfam" id="NF001389">
    <property type="entry name" value="PRK00281.1-2"/>
    <property type="match status" value="1"/>
</dbReference>
<dbReference type="NCBIfam" id="NF001390">
    <property type="entry name" value="PRK00281.1-4"/>
    <property type="match status" value="1"/>
</dbReference>
<dbReference type="NCBIfam" id="TIGR00753">
    <property type="entry name" value="undec_PP_bacA"/>
    <property type="match status" value="1"/>
</dbReference>
<dbReference type="PANTHER" id="PTHR30622">
    <property type="entry name" value="UNDECAPRENYL-DIPHOSPHATASE"/>
    <property type="match status" value="1"/>
</dbReference>
<dbReference type="PANTHER" id="PTHR30622:SF3">
    <property type="entry name" value="UNDECAPRENYL-DIPHOSPHATASE"/>
    <property type="match status" value="1"/>
</dbReference>
<dbReference type="Pfam" id="PF02673">
    <property type="entry name" value="BacA"/>
    <property type="match status" value="1"/>
</dbReference>
<sequence length="268" mass="29210">MAEQTIAQALMLGVLEGFTEFIPVSSTGHILLAGHFLGFQSTGKAFEILIQLGAILAVLSVYAGRLWKMLIELPHEPATRRFVLGILIAFLPAAIIGVVAYQIIKTVLFETPLLICTMLILGGIVLLWVDRWAKKPLYRDITQFPLSVYLKIGLFQCLSMIPGTSRSGSTIVGALLLGVDKRAAAEFSFFLAMPTMAGAFAYDLYKNYHLLTAADLQIIGVGFIAAFVAAVLVVRSLLDFVSRRGYALFGWWRIFIGVLGLIGVLVLG</sequence>
<gene>
    <name evidence="1" type="primary">uppP</name>
    <name type="ordered locus">Meso_3600</name>
</gene>
<protein>
    <recommendedName>
        <fullName evidence="1">Undecaprenyl-diphosphatase</fullName>
        <ecNumber evidence="1">3.6.1.27</ecNumber>
    </recommendedName>
    <alternativeName>
        <fullName evidence="1">Bacitracin resistance protein</fullName>
    </alternativeName>
    <alternativeName>
        <fullName evidence="1">Undecaprenyl pyrophosphate phosphatase</fullName>
    </alternativeName>
</protein>
<accession>Q11CA6</accession>
<keyword id="KW-0046">Antibiotic resistance</keyword>
<keyword id="KW-0997">Cell inner membrane</keyword>
<keyword id="KW-1003">Cell membrane</keyword>
<keyword id="KW-0133">Cell shape</keyword>
<keyword id="KW-0961">Cell wall biogenesis/degradation</keyword>
<keyword id="KW-0378">Hydrolase</keyword>
<keyword id="KW-0472">Membrane</keyword>
<keyword id="KW-0573">Peptidoglycan synthesis</keyword>
<keyword id="KW-0812">Transmembrane</keyword>
<keyword id="KW-1133">Transmembrane helix</keyword>
<proteinExistence type="inferred from homology"/>
<organism>
    <name type="scientific">Chelativorans sp. (strain BNC1)</name>
    <dbReference type="NCBI Taxonomy" id="266779"/>
    <lineage>
        <taxon>Bacteria</taxon>
        <taxon>Pseudomonadati</taxon>
        <taxon>Pseudomonadota</taxon>
        <taxon>Alphaproteobacteria</taxon>
        <taxon>Hyphomicrobiales</taxon>
        <taxon>Phyllobacteriaceae</taxon>
        <taxon>Chelativorans</taxon>
    </lineage>
</organism>
<feature type="chain" id="PRO_0000290726" description="Undecaprenyl-diphosphatase">
    <location>
        <begin position="1"/>
        <end position="268"/>
    </location>
</feature>
<feature type="transmembrane region" description="Helical" evidence="1">
    <location>
        <begin position="5"/>
        <end position="25"/>
    </location>
</feature>
<feature type="transmembrane region" description="Helical" evidence="1">
    <location>
        <begin position="43"/>
        <end position="63"/>
    </location>
</feature>
<feature type="transmembrane region" description="Helical" evidence="1">
    <location>
        <begin position="84"/>
        <end position="104"/>
    </location>
</feature>
<feature type="transmembrane region" description="Helical" evidence="1">
    <location>
        <begin position="107"/>
        <end position="127"/>
    </location>
</feature>
<feature type="transmembrane region" description="Helical" evidence="1">
    <location>
        <begin position="184"/>
        <end position="204"/>
    </location>
</feature>
<feature type="transmembrane region" description="Helical" evidence="1">
    <location>
        <begin position="214"/>
        <end position="234"/>
    </location>
</feature>
<feature type="transmembrane region" description="Helical" evidence="1">
    <location>
        <begin position="247"/>
        <end position="267"/>
    </location>
</feature>
<reference key="1">
    <citation type="submission" date="2006-06" db="EMBL/GenBank/DDBJ databases">
        <title>Complete sequence of chromosome of Mesorhizobium sp. BNC1.</title>
        <authorList>
            <consortium name="US DOE Joint Genome Institute"/>
            <person name="Copeland A."/>
            <person name="Lucas S."/>
            <person name="Lapidus A."/>
            <person name="Barry K."/>
            <person name="Detter J.C."/>
            <person name="Glavina del Rio T."/>
            <person name="Hammon N."/>
            <person name="Israni S."/>
            <person name="Dalin E."/>
            <person name="Tice H."/>
            <person name="Pitluck S."/>
            <person name="Chertkov O."/>
            <person name="Brettin T."/>
            <person name="Bruce D."/>
            <person name="Han C."/>
            <person name="Tapia R."/>
            <person name="Gilna P."/>
            <person name="Schmutz J."/>
            <person name="Larimer F."/>
            <person name="Land M."/>
            <person name="Hauser L."/>
            <person name="Kyrpides N."/>
            <person name="Mikhailova N."/>
            <person name="Richardson P."/>
        </authorList>
    </citation>
    <scope>NUCLEOTIDE SEQUENCE [LARGE SCALE GENOMIC DNA]</scope>
    <source>
        <strain>BNC1</strain>
    </source>
</reference>
<comment type="function">
    <text evidence="1">Catalyzes the dephosphorylation of undecaprenyl diphosphate (UPP). Confers resistance to bacitracin.</text>
</comment>
<comment type="catalytic activity">
    <reaction evidence="1">
        <text>di-trans,octa-cis-undecaprenyl diphosphate + H2O = di-trans,octa-cis-undecaprenyl phosphate + phosphate + H(+)</text>
        <dbReference type="Rhea" id="RHEA:28094"/>
        <dbReference type="ChEBI" id="CHEBI:15377"/>
        <dbReference type="ChEBI" id="CHEBI:15378"/>
        <dbReference type="ChEBI" id="CHEBI:43474"/>
        <dbReference type="ChEBI" id="CHEBI:58405"/>
        <dbReference type="ChEBI" id="CHEBI:60392"/>
        <dbReference type="EC" id="3.6.1.27"/>
    </reaction>
</comment>
<comment type="subcellular location">
    <subcellularLocation>
        <location evidence="1">Cell inner membrane</location>
        <topology evidence="1">Multi-pass membrane protein</topology>
    </subcellularLocation>
</comment>
<comment type="miscellaneous">
    <text>Bacitracin is thought to be involved in the inhibition of peptidoglycan synthesis by sequestering undecaprenyl diphosphate, thereby reducing the pool of lipid carrier available.</text>
</comment>
<comment type="similarity">
    <text evidence="1">Belongs to the UppP family.</text>
</comment>
<name>UPPP_CHESB</name>